<sequence>MAEQQAFHSGFVAIIGRPNVGKSTLLNRVVGQKVAIMSDKAQTTRNRIQGIYTTADTQMVFIDTPGIHKPHSRLGDFMVKSALSTLGEVDAVLFMINADERRGAGDNFIIDRLKTVKQPIYLVINKIDQVHPDHLLEIMDQYKDALPWKEVYPISALEGNNVDELLTTLKGQLPEGPQYYPSDQITDHPERFIISELIREKVLELTRQEVPHSTAVVIDSIKRQDEEKIHVQATIIIERSSQKGIIIGKGGSMLKKIGSLARRDIEHLLGDKVYLELWVKVQENWKDRQDLLASYGYRQDDY</sequence>
<comment type="function">
    <text evidence="1">An essential GTPase that binds both GDP and GTP, with rapid nucleotide exchange. Plays a role in 16S rRNA processing and 30S ribosomal subunit biogenesis and possibly also in cell cycle regulation and energy metabolism.</text>
</comment>
<comment type="subunit">
    <text evidence="1">Monomer.</text>
</comment>
<comment type="subcellular location">
    <subcellularLocation>
        <location>Cytoplasm</location>
    </subcellularLocation>
    <subcellularLocation>
        <location evidence="1">Cell membrane</location>
        <topology evidence="1">Peripheral membrane protein</topology>
    </subcellularLocation>
</comment>
<comment type="similarity">
    <text evidence="1 2">Belongs to the TRAFAC class TrmE-Era-EngA-EngB-Septin-like GTPase superfamily. Era GTPase family.</text>
</comment>
<accession>Q88VS0</accession>
<accession>F9UPT2</accession>
<name>ERA_LACPL</name>
<gene>
    <name evidence="1" type="primary">era</name>
    <name type="ordered locus">lp_1967</name>
</gene>
<keyword id="KW-1003">Cell membrane</keyword>
<keyword id="KW-0963">Cytoplasm</keyword>
<keyword id="KW-0342">GTP-binding</keyword>
<keyword id="KW-0472">Membrane</keyword>
<keyword id="KW-0547">Nucleotide-binding</keyword>
<keyword id="KW-1185">Reference proteome</keyword>
<keyword id="KW-0690">Ribosome biogenesis</keyword>
<keyword id="KW-0694">RNA-binding</keyword>
<keyword id="KW-0699">rRNA-binding</keyword>
<protein>
    <recommendedName>
        <fullName evidence="1">GTPase Era</fullName>
    </recommendedName>
</protein>
<reference key="1">
    <citation type="journal article" date="2003" name="Proc. Natl. Acad. Sci. U.S.A.">
        <title>Complete genome sequence of Lactobacillus plantarum WCFS1.</title>
        <authorList>
            <person name="Kleerebezem M."/>
            <person name="Boekhorst J."/>
            <person name="van Kranenburg R."/>
            <person name="Molenaar D."/>
            <person name="Kuipers O.P."/>
            <person name="Leer R."/>
            <person name="Tarchini R."/>
            <person name="Peters S.A."/>
            <person name="Sandbrink H.M."/>
            <person name="Fiers M.W.E.J."/>
            <person name="Stiekema W."/>
            <person name="Klein Lankhorst R.M."/>
            <person name="Bron P.A."/>
            <person name="Hoffer S.M."/>
            <person name="Nierop Groot M.N."/>
            <person name="Kerkhoven R."/>
            <person name="De Vries M."/>
            <person name="Ursing B."/>
            <person name="De Vos W.M."/>
            <person name="Siezen R.J."/>
        </authorList>
    </citation>
    <scope>NUCLEOTIDE SEQUENCE [LARGE SCALE GENOMIC DNA]</scope>
    <source>
        <strain>ATCC BAA-793 / NCIMB 8826 / WCFS1</strain>
    </source>
</reference>
<reference key="2">
    <citation type="journal article" date="2012" name="J. Bacteriol.">
        <title>Complete resequencing and reannotation of the Lactobacillus plantarum WCFS1 genome.</title>
        <authorList>
            <person name="Siezen R.J."/>
            <person name="Francke C."/>
            <person name="Renckens B."/>
            <person name="Boekhorst J."/>
            <person name="Wels M."/>
            <person name="Kleerebezem M."/>
            <person name="van Hijum S.A."/>
        </authorList>
    </citation>
    <scope>NUCLEOTIDE SEQUENCE [LARGE SCALE GENOMIC DNA]</scope>
    <scope>GENOME REANNOTATION</scope>
    <source>
        <strain>ATCC BAA-793 / NCIMB 8826 / WCFS1</strain>
    </source>
</reference>
<dbReference type="EMBL" id="AL935263">
    <property type="protein sequence ID" value="CCC79221.1"/>
    <property type="molecule type" value="Genomic_DNA"/>
</dbReference>
<dbReference type="RefSeq" id="WP_003640679.1">
    <property type="nucleotide sequence ID" value="NC_004567.2"/>
</dbReference>
<dbReference type="RefSeq" id="YP_004889735.1">
    <property type="nucleotide sequence ID" value="NC_004567.2"/>
</dbReference>
<dbReference type="SMR" id="Q88VS0"/>
<dbReference type="STRING" id="220668.lp_1967"/>
<dbReference type="EnsemblBacteria" id="CCC79221">
    <property type="protein sequence ID" value="CCC79221"/>
    <property type="gene ID" value="lp_1967"/>
</dbReference>
<dbReference type="GeneID" id="77218316"/>
<dbReference type="KEGG" id="lpl:lp_1967"/>
<dbReference type="PATRIC" id="fig|220668.9.peg.1661"/>
<dbReference type="eggNOG" id="COG1159">
    <property type="taxonomic scope" value="Bacteria"/>
</dbReference>
<dbReference type="HOGENOM" id="CLU_038009_1_0_9"/>
<dbReference type="OrthoDB" id="9805918at2"/>
<dbReference type="PhylomeDB" id="Q88VS0"/>
<dbReference type="Proteomes" id="UP000000432">
    <property type="component" value="Chromosome"/>
</dbReference>
<dbReference type="GO" id="GO:0005829">
    <property type="term" value="C:cytosol"/>
    <property type="evidence" value="ECO:0007669"/>
    <property type="project" value="TreeGrafter"/>
</dbReference>
<dbReference type="GO" id="GO:0005886">
    <property type="term" value="C:plasma membrane"/>
    <property type="evidence" value="ECO:0007669"/>
    <property type="project" value="UniProtKB-SubCell"/>
</dbReference>
<dbReference type="GO" id="GO:0005525">
    <property type="term" value="F:GTP binding"/>
    <property type="evidence" value="ECO:0007669"/>
    <property type="project" value="UniProtKB-UniRule"/>
</dbReference>
<dbReference type="GO" id="GO:0003924">
    <property type="term" value="F:GTPase activity"/>
    <property type="evidence" value="ECO:0007669"/>
    <property type="project" value="UniProtKB-UniRule"/>
</dbReference>
<dbReference type="GO" id="GO:0043024">
    <property type="term" value="F:ribosomal small subunit binding"/>
    <property type="evidence" value="ECO:0007669"/>
    <property type="project" value="TreeGrafter"/>
</dbReference>
<dbReference type="GO" id="GO:0070181">
    <property type="term" value="F:small ribosomal subunit rRNA binding"/>
    <property type="evidence" value="ECO:0007669"/>
    <property type="project" value="UniProtKB-UniRule"/>
</dbReference>
<dbReference type="GO" id="GO:0000028">
    <property type="term" value="P:ribosomal small subunit assembly"/>
    <property type="evidence" value="ECO:0007669"/>
    <property type="project" value="TreeGrafter"/>
</dbReference>
<dbReference type="CDD" id="cd04163">
    <property type="entry name" value="Era"/>
    <property type="match status" value="1"/>
</dbReference>
<dbReference type="CDD" id="cd22534">
    <property type="entry name" value="KH-II_Era"/>
    <property type="match status" value="1"/>
</dbReference>
<dbReference type="FunFam" id="3.30.300.20:FF:000003">
    <property type="entry name" value="GTPase Era"/>
    <property type="match status" value="1"/>
</dbReference>
<dbReference type="FunFam" id="3.40.50.300:FF:000094">
    <property type="entry name" value="GTPase Era"/>
    <property type="match status" value="1"/>
</dbReference>
<dbReference type="Gene3D" id="3.30.300.20">
    <property type="match status" value="1"/>
</dbReference>
<dbReference type="Gene3D" id="3.40.50.300">
    <property type="entry name" value="P-loop containing nucleotide triphosphate hydrolases"/>
    <property type="match status" value="1"/>
</dbReference>
<dbReference type="HAMAP" id="MF_00367">
    <property type="entry name" value="GTPase_Era"/>
    <property type="match status" value="1"/>
</dbReference>
<dbReference type="InterPro" id="IPR030388">
    <property type="entry name" value="G_ERA_dom"/>
</dbReference>
<dbReference type="InterPro" id="IPR006073">
    <property type="entry name" value="GTP-bd"/>
</dbReference>
<dbReference type="InterPro" id="IPR005662">
    <property type="entry name" value="GTPase_Era-like"/>
</dbReference>
<dbReference type="InterPro" id="IPR015946">
    <property type="entry name" value="KH_dom-like_a/b"/>
</dbReference>
<dbReference type="InterPro" id="IPR004044">
    <property type="entry name" value="KH_dom_type_2"/>
</dbReference>
<dbReference type="InterPro" id="IPR009019">
    <property type="entry name" value="KH_sf_prok-type"/>
</dbReference>
<dbReference type="InterPro" id="IPR027417">
    <property type="entry name" value="P-loop_NTPase"/>
</dbReference>
<dbReference type="InterPro" id="IPR005225">
    <property type="entry name" value="Small_GTP-bd"/>
</dbReference>
<dbReference type="NCBIfam" id="TIGR00436">
    <property type="entry name" value="era"/>
    <property type="match status" value="1"/>
</dbReference>
<dbReference type="NCBIfam" id="NF000908">
    <property type="entry name" value="PRK00089.1"/>
    <property type="match status" value="1"/>
</dbReference>
<dbReference type="NCBIfam" id="TIGR00231">
    <property type="entry name" value="small_GTP"/>
    <property type="match status" value="1"/>
</dbReference>
<dbReference type="PANTHER" id="PTHR42698">
    <property type="entry name" value="GTPASE ERA"/>
    <property type="match status" value="1"/>
</dbReference>
<dbReference type="PANTHER" id="PTHR42698:SF1">
    <property type="entry name" value="GTPASE ERA, MITOCHONDRIAL"/>
    <property type="match status" value="1"/>
</dbReference>
<dbReference type="Pfam" id="PF07650">
    <property type="entry name" value="KH_2"/>
    <property type="match status" value="1"/>
</dbReference>
<dbReference type="Pfam" id="PF01926">
    <property type="entry name" value="MMR_HSR1"/>
    <property type="match status" value="1"/>
</dbReference>
<dbReference type="PRINTS" id="PR00326">
    <property type="entry name" value="GTP1OBG"/>
</dbReference>
<dbReference type="SUPFAM" id="SSF52540">
    <property type="entry name" value="P-loop containing nucleoside triphosphate hydrolases"/>
    <property type="match status" value="1"/>
</dbReference>
<dbReference type="SUPFAM" id="SSF54814">
    <property type="entry name" value="Prokaryotic type KH domain (KH-domain type II)"/>
    <property type="match status" value="1"/>
</dbReference>
<dbReference type="PROSITE" id="PS51713">
    <property type="entry name" value="G_ERA"/>
    <property type="match status" value="1"/>
</dbReference>
<dbReference type="PROSITE" id="PS50823">
    <property type="entry name" value="KH_TYPE_2"/>
    <property type="match status" value="1"/>
</dbReference>
<feature type="chain" id="PRO_0000180022" description="GTPase Era">
    <location>
        <begin position="1"/>
        <end position="302"/>
    </location>
</feature>
<feature type="domain" description="Era-type G" evidence="2">
    <location>
        <begin position="8"/>
        <end position="175"/>
    </location>
</feature>
<feature type="domain" description="KH type-2" evidence="1">
    <location>
        <begin position="206"/>
        <end position="283"/>
    </location>
</feature>
<feature type="region of interest" description="G1" evidence="2">
    <location>
        <begin position="16"/>
        <end position="23"/>
    </location>
</feature>
<feature type="region of interest" description="G2" evidence="2">
    <location>
        <begin position="42"/>
        <end position="46"/>
    </location>
</feature>
<feature type="region of interest" description="G3" evidence="2">
    <location>
        <begin position="63"/>
        <end position="66"/>
    </location>
</feature>
<feature type="region of interest" description="G4" evidence="2">
    <location>
        <begin position="125"/>
        <end position="128"/>
    </location>
</feature>
<feature type="region of interest" description="G5" evidence="2">
    <location>
        <begin position="154"/>
        <end position="156"/>
    </location>
</feature>
<feature type="binding site" evidence="1">
    <location>
        <begin position="16"/>
        <end position="23"/>
    </location>
    <ligand>
        <name>GTP</name>
        <dbReference type="ChEBI" id="CHEBI:37565"/>
    </ligand>
</feature>
<feature type="binding site" evidence="1">
    <location>
        <begin position="63"/>
        <end position="67"/>
    </location>
    <ligand>
        <name>GTP</name>
        <dbReference type="ChEBI" id="CHEBI:37565"/>
    </ligand>
</feature>
<feature type="binding site" evidence="1">
    <location>
        <begin position="125"/>
        <end position="128"/>
    </location>
    <ligand>
        <name>GTP</name>
        <dbReference type="ChEBI" id="CHEBI:37565"/>
    </ligand>
</feature>
<proteinExistence type="inferred from homology"/>
<evidence type="ECO:0000255" key="1">
    <source>
        <dbReference type="HAMAP-Rule" id="MF_00367"/>
    </source>
</evidence>
<evidence type="ECO:0000255" key="2">
    <source>
        <dbReference type="PROSITE-ProRule" id="PRU01050"/>
    </source>
</evidence>
<organism>
    <name type="scientific">Lactiplantibacillus plantarum (strain ATCC BAA-793 / NCIMB 8826 / WCFS1)</name>
    <name type="common">Lactobacillus plantarum</name>
    <dbReference type="NCBI Taxonomy" id="220668"/>
    <lineage>
        <taxon>Bacteria</taxon>
        <taxon>Bacillati</taxon>
        <taxon>Bacillota</taxon>
        <taxon>Bacilli</taxon>
        <taxon>Lactobacillales</taxon>
        <taxon>Lactobacillaceae</taxon>
        <taxon>Lactiplantibacillus</taxon>
    </lineage>
</organism>